<organism>
    <name type="scientific">Influenza A virus (strain A/Duck/Czechoslovakia/1956 H4N6)</name>
    <dbReference type="NCBI Taxonomy" id="385590"/>
    <lineage>
        <taxon>Viruses</taxon>
        <taxon>Riboviria</taxon>
        <taxon>Orthornavirae</taxon>
        <taxon>Negarnaviricota</taxon>
        <taxon>Polyploviricotina</taxon>
        <taxon>Insthoviricetes</taxon>
        <taxon>Articulavirales</taxon>
        <taxon>Orthomyxoviridae</taxon>
        <taxon>Alphainfluenzavirus</taxon>
        <taxon>Alphainfluenzavirus influenzae</taxon>
        <taxon>Influenza A virus</taxon>
    </lineage>
</organism>
<accession>Q20P14</accession>
<comment type="function">
    <text evidence="1">RNA-dependent RNA polymerase which is responsible for replication and transcription of virus RNA segments. The transcription of viral mRNAs occurs by a unique mechanism called cap-snatching. 5' methylated caps of cellular mRNAs are cleaved after 10-13 nucleotides by PA. In turn, these short capped RNAs are used as primers by PB1 for transcription of viral mRNAs. During virus replication, PB1 initiates RNA synthesis and copy vRNA into complementary RNA (cRNA) which in turn serves as a template for the production of more vRNAs.</text>
</comment>
<comment type="catalytic activity">
    <reaction evidence="1">
        <text>RNA(n) + a ribonucleoside 5'-triphosphate = RNA(n+1) + diphosphate</text>
        <dbReference type="Rhea" id="RHEA:21248"/>
        <dbReference type="Rhea" id="RHEA-COMP:14527"/>
        <dbReference type="Rhea" id="RHEA-COMP:17342"/>
        <dbReference type="ChEBI" id="CHEBI:33019"/>
        <dbReference type="ChEBI" id="CHEBI:61557"/>
        <dbReference type="ChEBI" id="CHEBI:140395"/>
        <dbReference type="EC" id="2.7.7.48"/>
    </reaction>
</comment>
<comment type="subunit">
    <text evidence="1">Influenza RNA polymerase is composed of three subunits: PB1, PB2 and PA. Interacts (via N-terminus) with PA (via C-terminus). Interacts (via C-terminus) with PB2 (via N-terminus); this interaction is essential for transcription initiation.</text>
</comment>
<comment type="subcellular location">
    <subcellularLocation>
        <location evidence="1">Host nucleus</location>
    </subcellularLocation>
    <subcellularLocation>
        <location evidence="1">Host cytoplasm</location>
    </subcellularLocation>
</comment>
<comment type="PTM">
    <text evidence="1">Phosphorylated by host PRKCA.</text>
</comment>
<comment type="similarity">
    <text evidence="1">Belongs to the influenza viruses polymerase PB1 family.</text>
</comment>
<reference key="1">
    <citation type="journal article" date="2006" name="Science">
        <title>Large-scale sequence analysis of avian influenza isolates.</title>
        <authorList>
            <person name="Obenauer J.C."/>
            <person name="Denson J."/>
            <person name="Mehta P.K."/>
            <person name="Su X."/>
            <person name="Mukatira S."/>
            <person name="Finkelstein D.B."/>
            <person name="Xu X."/>
            <person name="Wang J."/>
            <person name="Ma J."/>
            <person name="Fan Y."/>
            <person name="Rakestraw K.M."/>
            <person name="Webster R.G."/>
            <person name="Hoffmann E."/>
            <person name="Krauss S."/>
            <person name="Zheng J."/>
            <person name="Zhang Z."/>
            <person name="Naeve C.W."/>
        </authorList>
    </citation>
    <scope>NUCLEOTIDE SEQUENCE [GENOMIC RNA]</scope>
</reference>
<sequence length="757" mass="86481">MDVNPTLLFLKVPAQNAISTTFPYTGDPPYSHGTGTGYTMDTVNRTHQYSERGKWTTNTETGAPQLNPIDGPLPKDNEPSGYAQTDCVLEAMAFLEGSHPGIFENSCLETMEVVQQTRVDKLTQGRQTYDWTLNRNQPAATALANTIEVFRSNGLTANESGRLIDFLKDVMESMDKEEMEIITHFQRKRRVRDNMTKKMITQRTIGKKKQRLNKRSYLIRALTLNTMTKDAERGKLKRRAIATPGMQIRGFVYFVETLARSICEKLEQSGLPVGGNEKKAKLANVVRKMMTNSQDTELSFTITGDNTKWNENQNPRMFLAMITYITRNQPEWFRNVLSIAPIMFSNKMARLGKGYMFESKSMKLRTQIPAEMLASIDLKYFNESTRKKIEKIRPLLIDGTASLSPGMMMGMFNMLSTVLGVSILNLGQKRYTKTTYWWDGLQSSDDFALIVNAPNHEGIQAGVDRFYRTCKLVGINMSKKKSYINRTGTFEFTSFFYRYGFVANFSMELPSFGVSGINESADMSIGVTVIKNNMINNDLGPATAQMALQLFIKDYRYTYRCHRGDTQIQTRRSFELKKLWEQTRSKAGLLVSDGGPNLYNIRNLHIPEVCLKWELMDEDYQGRLCNPLNPFISHKEIESVNNAVVMPAHGPAKSMEYDAVATTHSWIPKRNRSILNTSQRGILEDEQMYQKCCNLFEKFFPSSSYRRPVGISSMVEAMVSRARIDARIDFESGRIKKEEFAEIMKICFTIEELRRQK</sequence>
<feature type="chain" id="PRO_0000279591" description="RNA-directed RNA polymerase catalytic subunit">
    <location>
        <begin position="1"/>
        <end position="757"/>
    </location>
</feature>
<feature type="domain" description="RdRp catalytic" evidence="1">
    <location>
        <begin position="286"/>
        <end position="483"/>
    </location>
</feature>
<feature type="region of interest" description="Disordered" evidence="2">
    <location>
        <begin position="53"/>
        <end position="82"/>
    </location>
</feature>
<feature type="region of interest" description="Promoter-binding site" evidence="1">
    <location>
        <begin position="249"/>
        <end position="256"/>
    </location>
</feature>
<feature type="short sequence motif" description="Nuclear localization signal" evidence="1">
    <location>
        <begin position="187"/>
        <end position="195"/>
    </location>
</feature>
<feature type="short sequence motif" description="Nuclear localization signal" evidence="1">
    <location>
        <begin position="203"/>
        <end position="216"/>
    </location>
</feature>
<feature type="compositionally biased region" description="Polar residues" evidence="2">
    <location>
        <begin position="55"/>
        <end position="64"/>
    </location>
</feature>
<dbReference type="EC" id="2.7.7.48" evidence="1"/>
<dbReference type="EMBL" id="CY005821">
    <property type="protein sequence ID" value="ABB90228.1"/>
    <property type="molecule type" value="Genomic_RNA"/>
</dbReference>
<dbReference type="SMR" id="Q20P14"/>
<dbReference type="Proteomes" id="UP000008434">
    <property type="component" value="Genome"/>
</dbReference>
<dbReference type="Proteomes" id="UP000108613">
    <property type="component" value="Genome"/>
</dbReference>
<dbReference type="GO" id="GO:0030430">
    <property type="term" value="C:host cell cytoplasm"/>
    <property type="evidence" value="ECO:0007669"/>
    <property type="project" value="UniProtKB-SubCell"/>
</dbReference>
<dbReference type="GO" id="GO:0042025">
    <property type="term" value="C:host cell nucleus"/>
    <property type="evidence" value="ECO:0007669"/>
    <property type="project" value="UniProtKB-SubCell"/>
</dbReference>
<dbReference type="GO" id="GO:0000166">
    <property type="term" value="F:nucleotide binding"/>
    <property type="evidence" value="ECO:0007669"/>
    <property type="project" value="UniProtKB-UniRule"/>
</dbReference>
<dbReference type="GO" id="GO:0003723">
    <property type="term" value="F:RNA binding"/>
    <property type="evidence" value="ECO:0007669"/>
    <property type="project" value="InterPro"/>
</dbReference>
<dbReference type="GO" id="GO:0003968">
    <property type="term" value="F:RNA-directed RNA polymerase activity"/>
    <property type="evidence" value="ECO:0007669"/>
    <property type="project" value="UniProtKB-UniRule"/>
</dbReference>
<dbReference type="GO" id="GO:0006351">
    <property type="term" value="P:DNA-templated transcription"/>
    <property type="evidence" value="ECO:0007669"/>
    <property type="project" value="UniProtKB-UniRule"/>
</dbReference>
<dbReference type="GO" id="GO:0039657">
    <property type="term" value="P:symbiont-mediated suppression of host gene expression"/>
    <property type="evidence" value="ECO:0007669"/>
    <property type="project" value="UniProtKB-KW"/>
</dbReference>
<dbReference type="GO" id="GO:0039523">
    <property type="term" value="P:symbiont-mediated suppression of host mRNA transcription via inhibition of RNA polymerase II activity"/>
    <property type="evidence" value="ECO:0007669"/>
    <property type="project" value="UniProtKB-UniRule"/>
</dbReference>
<dbReference type="GO" id="GO:0039694">
    <property type="term" value="P:viral RNA genome replication"/>
    <property type="evidence" value="ECO:0007669"/>
    <property type="project" value="UniProtKB-UniRule"/>
</dbReference>
<dbReference type="GO" id="GO:0019083">
    <property type="term" value="P:viral transcription"/>
    <property type="evidence" value="ECO:0007669"/>
    <property type="project" value="UniProtKB-KW"/>
</dbReference>
<dbReference type="Gene3D" id="6.10.140.720">
    <property type="match status" value="1"/>
</dbReference>
<dbReference type="HAMAP" id="MF_04065">
    <property type="entry name" value="INFV_RDRP"/>
    <property type="match status" value="1"/>
</dbReference>
<dbReference type="InterPro" id="IPR007099">
    <property type="entry name" value="RNA-dir_pol_NSvirus"/>
</dbReference>
<dbReference type="InterPro" id="IPR001407">
    <property type="entry name" value="RNA_pol_PB1_influenza"/>
</dbReference>
<dbReference type="Pfam" id="PF00602">
    <property type="entry name" value="Flu_PB1"/>
    <property type="match status" value="1"/>
</dbReference>
<dbReference type="PIRSF" id="PIRSF000827">
    <property type="entry name" value="RdRPol_OMV"/>
    <property type="match status" value="1"/>
</dbReference>
<dbReference type="PROSITE" id="PS50525">
    <property type="entry name" value="RDRP_SSRNA_NEG_SEG"/>
    <property type="match status" value="1"/>
</dbReference>
<name>RDRP_I56A1</name>
<gene>
    <name evidence="1" type="primary">PB1</name>
</gene>
<evidence type="ECO:0000255" key="1">
    <source>
        <dbReference type="HAMAP-Rule" id="MF_04065"/>
    </source>
</evidence>
<evidence type="ECO:0000256" key="2">
    <source>
        <dbReference type="SAM" id="MobiDB-lite"/>
    </source>
</evidence>
<proteinExistence type="inferred from homology"/>
<organismHost>
    <name type="scientific">Aves</name>
    <dbReference type="NCBI Taxonomy" id="8782"/>
</organismHost>
<organismHost>
    <name type="scientific">Sus scrofa</name>
    <name type="common">Pig</name>
    <dbReference type="NCBI Taxonomy" id="9823"/>
</organismHost>
<keyword id="KW-1262">Eukaryotic host gene expression shutoff by virus</keyword>
<keyword id="KW-1191">Eukaryotic host transcription shutoff by virus</keyword>
<keyword id="KW-1035">Host cytoplasm</keyword>
<keyword id="KW-1190">Host gene expression shutoff by virus</keyword>
<keyword id="KW-1048">Host nucleus</keyword>
<keyword id="KW-0945">Host-virus interaction</keyword>
<keyword id="KW-1104">Inhibition of host RNA polymerase II by virus</keyword>
<keyword id="KW-0547">Nucleotide-binding</keyword>
<keyword id="KW-0548">Nucleotidyltransferase</keyword>
<keyword id="KW-0597">Phosphoprotein</keyword>
<keyword id="KW-0696">RNA-directed RNA polymerase</keyword>
<keyword id="KW-0808">Transferase</keyword>
<keyword id="KW-0693">Viral RNA replication</keyword>
<keyword id="KW-1195">Viral transcription</keyword>
<protein>
    <recommendedName>
        <fullName evidence="1">RNA-directed RNA polymerase catalytic subunit</fullName>
        <ecNumber evidence="1">2.7.7.48</ecNumber>
    </recommendedName>
    <alternativeName>
        <fullName evidence="1">Polymerase basic protein 1</fullName>
        <shortName evidence="1">PB1</shortName>
    </alternativeName>
    <alternativeName>
        <fullName evidence="1">RNA-directed RNA polymerase subunit P1</fullName>
    </alternativeName>
</protein>